<dbReference type="EC" id="4.1.2.-" evidence="1"/>
<dbReference type="EMBL" id="AL935263">
    <property type="protein sequence ID" value="CCC80514.1"/>
    <property type="molecule type" value="Genomic_DNA"/>
</dbReference>
<dbReference type="RefSeq" id="WP_003642912.1">
    <property type="nucleotide sequence ID" value="NC_004567.2"/>
</dbReference>
<dbReference type="RefSeq" id="YP_004891028.1">
    <property type="nucleotide sequence ID" value="NC_004567.2"/>
</dbReference>
<dbReference type="SMR" id="Q88S87"/>
<dbReference type="STRING" id="220668.lp_3551"/>
<dbReference type="EnsemblBacteria" id="CCC80514">
    <property type="protein sequence ID" value="CCC80514"/>
    <property type="gene ID" value="lp_3551"/>
</dbReference>
<dbReference type="KEGG" id="lpl:lp_3551"/>
<dbReference type="PATRIC" id="fig|220668.9.peg.2961"/>
<dbReference type="eggNOG" id="COG3957">
    <property type="taxonomic scope" value="Bacteria"/>
</dbReference>
<dbReference type="HOGENOM" id="CLU_013954_2_0_9"/>
<dbReference type="OrthoDB" id="9768449at2"/>
<dbReference type="PhylomeDB" id="Q88S87"/>
<dbReference type="BRENDA" id="4.1.2.9">
    <property type="organism ID" value="2849"/>
</dbReference>
<dbReference type="SABIO-RK" id="Q88S87"/>
<dbReference type="Proteomes" id="UP000000432">
    <property type="component" value="Chromosome"/>
</dbReference>
<dbReference type="GO" id="GO:0016832">
    <property type="term" value="F:aldehyde-lyase activity"/>
    <property type="evidence" value="ECO:0007669"/>
    <property type="project" value="UniProtKB-UniRule"/>
</dbReference>
<dbReference type="GO" id="GO:0005975">
    <property type="term" value="P:carbohydrate metabolic process"/>
    <property type="evidence" value="ECO:0007669"/>
    <property type="project" value="InterPro"/>
</dbReference>
<dbReference type="CDD" id="cd02011">
    <property type="entry name" value="TPP_PK"/>
    <property type="match status" value="1"/>
</dbReference>
<dbReference type="Gene3D" id="3.40.50.920">
    <property type="match status" value="1"/>
</dbReference>
<dbReference type="Gene3D" id="3.40.50.970">
    <property type="match status" value="2"/>
</dbReference>
<dbReference type="HAMAP" id="MF_01403">
    <property type="entry name" value="Phosphoketolase"/>
    <property type="match status" value="1"/>
</dbReference>
<dbReference type="InterPro" id="IPR023962">
    <property type="entry name" value="Phosphoketolase"/>
</dbReference>
<dbReference type="InterPro" id="IPR029061">
    <property type="entry name" value="THDP-binding"/>
</dbReference>
<dbReference type="InterPro" id="IPR009014">
    <property type="entry name" value="Transketo_C/PFOR_II"/>
</dbReference>
<dbReference type="InterPro" id="IPR005593">
    <property type="entry name" value="Xul5P/Fru6P_PKetolase"/>
</dbReference>
<dbReference type="InterPro" id="IPR018969">
    <property type="entry name" value="Xul5P/Fru6P_PKetolase_C"/>
</dbReference>
<dbReference type="InterPro" id="IPR019790">
    <property type="entry name" value="Xul5P/Fru6P_PKetolase_CS"/>
</dbReference>
<dbReference type="InterPro" id="IPR018970">
    <property type="entry name" value="Xul5P/Fru6P_PKetolase_N"/>
</dbReference>
<dbReference type="InterPro" id="IPR019789">
    <property type="entry name" value="Xul5P/Fru6P_PKetolase_ThDP_BS"/>
</dbReference>
<dbReference type="NCBIfam" id="NF003618">
    <property type="entry name" value="PRK05261.1-3"/>
    <property type="match status" value="1"/>
</dbReference>
<dbReference type="NCBIfam" id="NF003619">
    <property type="entry name" value="PRK05261.1-4"/>
    <property type="match status" value="1"/>
</dbReference>
<dbReference type="PANTHER" id="PTHR31273">
    <property type="entry name" value="PHOSPHOKETOLASE-RELATED"/>
    <property type="match status" value="1"/>
</dbReference>
<dbReference type="PANTHER" id="PTHR31273:SF0">
    <property type="entry name" value="PHOSPHOKETOLASE-RELATED"/>
    <property type="match status" value="1"/>
</dbReference>
<dbReference type="Pfam" id="PF03894">
    <property type="entry name" value="XFP"/>
    <property type="match status" value="1"/>
</dbReference>
<dbReference type="Pfam" id="PF09363">
    <property type="entry name" value="XFP_C"/>
    <property type="match status" value="1"/>
</dbReference>
<dbReference type="Pfam" id="PF09364">
    <property type="entry name" value="XFP_N"/>
    <property type="match status" value="1"/>
</dbReference>
<dbReference type="PIRSF" id="PIRSF017245">
    <property type="entry name" value="Phosphoketolase"/>
    <property type="match status" value="1"/>
</dbReference>
<dbReference type="SUPFAM" id="SSF52518">
    <property type="entry name" value="Thiamin diphosphate-binding fold (THDP-binding)"/>
    <property type="match status" value="2"/>
</dbReference>
<dbReference type="PROSITE" id="PS60002">
    <property type="entry name" value="PHOSPHOKETOLASE_1"/>
    <property type="match status" value="1"/>
</dbReference>
<dbReference type="PROSITE" id="PS60003">
    <property type="entry name" value="PHOSPHOKETOLASE_2"/>
    <property type="match status" value="1"/>
</dbReference>
<name>PHK2_LACPL</name>
<feature type="chain" id="PRO_0000193879" description="Probable phosphoketolase 2">
    <location>
        <begin position="1"/>
        <end position="796"/>
    </location>
</feature>
<accession>Q88S87</accession>
<accession>F9ULA7</accession>
<organism>
    <name type="scientific">Lactiplantibacillus plantarum (strain ATCC BAA-793 / NCIMB 8826 / WCFS1)</name>
    <name type="common">Lactobacillus plantarum</name>
    <dbReference type="NCBI Taxonomy" id="220668"/>
    <lineage>
        <taxon>Bacteria</taxon>
        <taxon>Bacillati</taxon>
        <taxon>Bacillota</taxon>
        <taxon>Bacilli</taxon>
        <taxon>Lactobacillales</taxon>
        <taxon>Lactobacillaceae</taxon>
        <taxon>Lactiplantibacillus</taxon>
    </lineage>
</organism>
<proteinExistence type="inferred from homology"/>
<sequence>MSEAIKSKTVDYSSDEYLKRVDEYWRAANYISVGQLYLLNNPLLREPLKATDVKVHPIGHWGTIAGQNFIYAHLNRAINKYGLNMFYIEGPGHGGQVMVSNSYLDGTYTETYPKITQDKAGMKRLFKQFSFPGGVASHADPKTPGSIHEGGELGYSILHGAGAVLDNPGLIAATVVGDGESETGPLATSWQVNKFLNPITDGTVLPILNLNGFKISNPTVLSRESHEELEDYFKGLGWDPHFVEGTDPAKMHKIMAEELDKVIEEIHAIRKNAKDNNDESRPKWPMIVFRAPKGWTGPKSWDGEPIEGSFRAHQIPIPVDRNHMEHADKLVDWLKSYKPEELFDENGTLKPEIAAIIPEGQARMAANPVTNGGKLTKDLITPNIDDYALDNKSHGKEDGSDMTELGKYIRDLIELNKDNKNFRGWGPDETLSNKLGAAFEDTKRQWMEPIHEPNDALLAPQGRIIDSMLSEHMDEGMLEAYNLTGRYGFFASYESFLRVVDSMLTQHFKWLRNSHEETPWRADVPSLNVIASSTAFQQDHNGYSHQDPGIISHLAEKKTEYVRAYLPGDANTLIATFDKAIQSKQLINLIIASKHPRPQWFTMDEAKRLVRDGLGVVDWASTDHGEEPDVVFATAGSEPTTESLAAVSILHARFPEMKIRFINVVDLLKLKKDDPRGLSDAEFDAFFTKDKPVIFAYHAYDDLVKTIFFDRHNHNLHVHGYREEGDITTPFDMRVRNELDRFHLVKAALLATPAYAEKGAHVIQEMNSILDKHHDYIRAEGTDIPEVENWKWTALK</sequence>
<gene>
    <name type="ordered locus">lp_3551</name>
</gene>
<reference key="1">
    <citation type="journal article" date="2003" name="Proc. Natl. Acad. Sci. U.S.A.">
        <title>Complete genome sequence of Lactobacillus plantarum WCFS1.</title>
        <authorList>
            <person name="Kleerebezem M."/>
            <person name="Boekhorst J."/>
            <person name="van Kranenburg R."/>
            <person name="Molenaar D."/>
            <person name="Kuipers O.P."/>
            <person name="Leer R."/>
            <person name="Tarchini R."/>
            <person name="Peters S.A."/>
            <person name="Sandbrink H.M."/>
            <person name="Fiers M.W.E.J."/>
            <person name="Stiekema W."/>
            <person name="Klein Lankhorst R.M."/>
            <person name="Bron P.A."/>
            <person name="Hoffer S.M."/>
            <person name="Nierop Groot M.N."/>
            <person name="Kerkhoven R."/>
            <person name="De Vries M."/>
            <person name="Ursing B."/>
            <person name="De Vos W.M."/>
            <person name="Siezen R.J."/>
        </authorList>
    </citation>
    <scope>NUCLEOTIDE SEQUENCE [LARGE SCALE GENOMIC DNA]</scope>
    <source>
        <strain>ATCC BAA-793 / NCIMB 8826 / WCFS1</strain>
    </source>
</reference>
<reference key="2">
    <citation type="journal article" date="2012" name="J. Bacteriol.">
        <title>Complete resequencing and reannotation of the Lactobacillus plantarum WCFS1 genome.</title>
        <authorList>
            <person name="Siezen R.J."/>
            <person name="Francke C."/>
            <person name="Renckens B."/>
            <person name="Boekhorst J."/>
            <person name="Wels M."/>
            <person name="Kleerebezem M."/>
            <person name="van Hijum S.A."/>
        </authorList>
    </citation>
    <scope>NUCLEOTIDE SEQUENCE [LARGE SCALE GENOMIC DNA]</scope>
    <scope>GENOME REANNOTATION</scope>
    <source>
        <strain>ATCC BAA-793 / NCIMB 8826 / WCFS1</strain>
    </source>
</reference>
<comment type="cofactor">
    <cofactor evidence="1">
        <name>thiamine diphosphate</name>
        <dbReference type="ChEBI" id="CHEBI:58937"/>
    </cofactor>
</comment>
<comment type="similarity">
    <text evidence="1">Belongs to the XFP family.</text>
</comment>
<evidence type="ECO:0000255" key="1">
    <source>
        <dbReference type="HAMAP-Rule" id="MF_01403"/>
    </source>
</evidence>
<keyword id="KW-0456">Lyase</keyword>
<keyword id="KW-1185">Reference proteome</keyword>
<keyword id="KW-0786">Thiamine pyrophosphate</keyword>
<protein>
    <recommendedName>
        <fullName evidence="1">Probable phosphoketolase 2</fullName>
        <ecNumber evidence="1">4.1.2.-</ecNumber>
    </recommendedName>
</protein>